<comment type="function">
    <text evidence="2">Plays an important role in survival in host blood through increasing tolerance to stresses such as heat, salt, or cycloheximide, which is essential for virulence.</text>
</comment>
<comment type="induction">
    <text evidence="2">Highly up-regulated by fetal bovine serum.</text>
</comment>
<reference key="1">
    <citation type="journal article" date="2004" name="Proc. Natl. Acad. Sci. U.S.A.">
        <title>The diploid genome sequence of Candida albicans.</title>
        <authorList>
            <person name="Jones T."/>
            <person name="Federspiel N.A."/>
            <person name="Chibana H."/>
            <person name="Dungan J."/>
            <person name="Kalman S."/>
            <person name="Magee B.B."/>
            <person name="Newport G."/>
            <person name="Thorstenson Y.R."/>
            <person name="Agabian N."/>
            <person name="Magee P.T."/>
            <person name="Davis R.W."/>
            <person name="Scherer S."/>
        </authorList>
    </citation>
    <scope>NUCLEOTIDE SEQUENCE [LARGE SCALE GENOMIC DNA]</scope>
    <source>
        <strain>SC5314 / ATCC MYA-2876</strain>
    </source>
</reference>
<reference key="2">
    <citation type="journal article" date="2007" name="Genome Biol.">
        <title>Assembly of the Candida albicans genome into sixteen supercontigs aligned on the eight chromosomes.</title>
        <authorList>
            <person name="van het Hoog M."/>
            <person name="Rast T.J."/>
            <person name="Martchenko M."/>
            <person name="Grindle S."/>
            <person name="Dignard D."/>
            <person name="Hogues H."/>
            <person name="Cuomo C."/>
            <person name="Berriman M."/>
            <person name="Scherer S."/>
            <person name="Magee B.B."/>
            <person name="Whiteway M."/>
            <person name="Chibana H."/>
            <person name="Nantel A."/>
            <person name="Magee P.T."/>
        </authorList>
    </citation>
    <scope>GENOME REANNOTATION</scope>
    <source>
        <strain>SC5314 / ATCC MYA-2876</strain>
    </source>
</reference>
<reference key="3">
    <citation type="journal article" date="2013" name="Genome Biol.">
        <title>Assembly of a phased diploid Candida albicans genome facilitates allele-specific measurements and provides a simple model for repeat and indel structure.</title>
        <authorList>
            <person name="Muzzey D."/>
            <person name="Schwartz K."/>
            <person name="Weissman J.S."/>
            <person name="Sherlock G."/>
        </authorList>
    </citation>
    <scope>NUCLEOTIDE SEQUENCE [LARGE SCALE GENOMIC DNA]</scope>
    <scope>GENOME REANNOTATION</scope>
    <source>
        <strain>SC5314 / ATCC MYA-2876</strain>
    </source>
</reference>
<reference key="4">
    <citation type="journal article" date="2009" name="Nature">
        <title>Evolution of pathogenicity and sexual reproduction in eight Candida genomes.</title>
        <authorList>
            <person name="Butler G."/>
            <person name="Rasmussen M.D."/>
            <person name="Lin M.F."/>
            <person name="Santos M.A.S."/>
            <person name="Sakthikumar S."/>
            <person name="Munro C.A."/>
            <person name="Rheinbay E."/>
            <person name="Grabherr M."/>
            <person name="Forche A."/>
            <person name="Reedy J.L."/>
            <person name="Agrafioti I."/>
            <person name="Arnaud M.B."/>
            <person name="Bates S."/>
            <person name="Brown A.J.P."/>
            <person name="Brunke S."/>
            <person name="Costanzo M.C."/>
            <person name="Fitzpatrick D.A."/>
            <person name="de Groot P.W.J."/>
            <person name="Harris D."/>
            <person name="Hoyer L.L."/>
            <person name="Hube B."/>
            <person name="Klis F.M."/>
            <person name="Kodira C."/>
            <person name="Lennard N."/>
            <person name="Logue M.E."/>
            <person name="Martin R."/>
            <person name="Neiman A.M."/>
            <person name="Nikolaou E."/>
            <person name="Quail M.A."/>
            <person name="Quinn J."/>
            <person name="Santos M.C."/>
            <person name="Schmitzberger F.F."/>
            <person name="Sherlock G."/>
            <person name="Shah P."/>
            <person name="Silverstein K.A.T."/>
            <person name="Skrzypek M.S."/>
            <person name="Soll D."/>
            <person name="Staggs R."/>
            <person name="Stansfield I."/>
            <person name="Stumpf M.P.H."/>
            <person name="Sudbery P.E."/>
            <person name="Srikantha T."/>
            <person name="Zeng Q."/>
            <person name="Berman J."/>
            <person name="Berriman M."/>
            <person name="Heitman J."/>
            <person name="Gow N.A.R."/>
            <person name="Lorenz M.C."/>
            <person name="Birren B.W."/>
            <person name="Kellis M."/>
            <person name="Cuomo C.A."/>
        </authorList>
    </citation>
    <scope>GENOME REANNOTATION</scope>
    <source>
        <strain>SC5314 / ATCC MYA-2876</strain>
    </source>
</reference>
<reference key="5">
    <citation type="journal article" date="2013" name="J. Proteomics">
        <title>Elucidation of potentially virulent factors of Candida albicans during serum adaptation by using quantitative time-course proteomics.</title>
        <authorList>
            <person name="Aoki W."/>
            <person name="Tatsukami Y."/>
            <person name="Kitahara N."/>
            <person name="Matsui K."/>
            <person name="Morisaka H."/>
            <person name="Kuroda K."/>
            <person name="Ueda M."/>
        </authorList>
    </citation>
    <scope>IDENTIFICATION BY MASS SPECTROMETRY</scope>
    <scope>INDUCTION</scope>
    <scope>FUNCTION</scope>
    <source>
        <strain>SC5314 / ATCC MYA-2876</strain>
    </source>
</reference>
<protein>
    <recommendedName>
        <fullName evidence="3">Blood-induced peptide 1</fullName>
    </recommendedName>
</protein>
<evidence type="ECO:0000255" key="1"/>
<evidence type="ECO:0000269" key="2">
    <source>
    </source>
</evidence>
<evidence type="ECO:0000303" key="3">
    <source>
    </source>
</evidence>
<feature type="chain" id="PRO_0000431532" description="Blood-induced peptide 1">
    <location>
        <begin position="1"/>
        <end position="77"/>
    </location>
</feature>
<feature type="coiled-coil region" evidence="1">
    <location>
        <begin position="38"/>
        <end position="71"/>
    </location>
</feature>
<accession>P0CT51</accession>
<accession>A0A1D8PFI4</accession>
<organism>
    <name type="scientific">Candida albicans (strain SC5314 / ATCC MYA-2876)</name>
    <name type="common">Yeast</name>
    <dbReference type="NCBI Taxonomy" id="237561"/>
    <lineage>
        <taxon>Eukaryota</taxon>
        <taxon>Fungi</taxon>
        <taxon>Dikarya</taxon>
        <taxon>Ascomycota</taxon>
        <taxon>Saccharomycotina</taxon>
        <taxon>Pichiomycetes</taxon>
        <taxon>Debaryomycetaceae</taxon>
        <taxon>Candida/Lodderomyces clade</taxon>
        <taxon>Candida</taxon>
    </lineage>
</organism>
<gene>
    <name evidence="3" type="primary">BLP1</name>
    <name type="ordered locus">CAALFM_C112850WA</name>
    <name type="ORF">CaO19.4914.1</name>
    <name type="ORF">orf19.4914.1</name>
</gene>
<proteinExistence type="evidence at protein level"/>
<sequence length="77" mass="9031">MDFKRKLSEVDADAAEDVKMDMGATIIPQRERATSVIEDFLHQENSELKKSLKNLEMENEKLKNILKTDYNVNYIRK</sequence>
<dbReference type="EMBL" id="CP017623">
    <property type="protein sequence ID" value="AOW26900.1"/>
    <property type="molecule type" value="Genomic_DNA"/>
</dbReference>
<dbReference type="RefSeq" id="XP_019330715.1">
    <property type="nucleotide sequence ID" value="XM_019475170.1"/>
</dbReference>
<dbReference type="SMR" id="P0CT51"/>
<dbReference type="STRING" id="237561.P0CT51"/>
<dbReference type="EnsemblFungi" id="C1_12850W_A-T">
    <property type="protein sequence ID" value="C1_12850W_A-T-p1"/>
    <property type="gene ID" value="C1_12850W_A"/>
</dbReference>
<dbReference type="GeneID" id="30515065"/>
<dbReference type="KEGG" id="cal:CAALFM_C112850WA"/>
<dbReference type="CGD" id="CAL0000190643">
    <property type="gene designation" value="BLP1"/>
</dbReference>
<dbReference type="VEuPathDB" id="FungiDB:C1_12850W_A"/>
<dbReference type="InParanoid" id="P0CT51"/>
<dbReference type="OrthoDB" id="4004982at2759"/>
<dbReference type="Proteomes" id="UP000000559">
    <property type="component" value="Chromosome 1"/>
</dbReference>
<name>BLP1_CANAL</name>
<keyword id="KW-0175">Coiled coil</keyword>
<keyword id="KW-1185">Reference proteome</keyword>
<keyword id="KW-0346">Stress response</keyword>